<protein>
    <recommendedName>
        <fullName evidence="1">V-type ATP synthase alpha chain</fullName>
        <ecNumber evidence="1">7.1.2.2</ecNumber>
    </recommendedName>
    <alternativeName>
        <fullName evidence="1">V-ATPase subunit A</fullName>
    </alternativeName>
</protein>
<sequence length="591" mass="65262">MTQGKIIKVSGPLVIASGMQEANIQDICRVGKLGLIGEIIEMRRDQASIQVYEETSGLGPGEPVVTTGEPLSVELGPGLISQMFDGIQRPLDRFKLATHNDFLVRGVEVPSLDRDIKWHFDSTIAIGQKVSTGDILGTVKETEVVNHKIMVPYGVSGXVVSIASGDFTIDEVVYEIKKLDGSFYKGTLMQKWPVRKARPVSKRLIPEEPLITGQRVIDAFFPVTKGGAAAVPGPFGAGKTVVQHQVAKFANVDIVIYVGCGERGNEMTDVLNEFPELIDPNTGQSIMQRTVLIANTSNMPVAAREASIYTGITMAEYFRDMGYSVAIMADSTSRWAEALREMSGRLEEMPGDEGYPAYLGSRIAEYYERAGRSQVLGLPEREGTITAIGAVSPPGGDISEPVTQNTLRIVKVFWGLDAPLAQRRHFPAINWLTSYSLYKDSVGTYIDGKEKTDWNSKITRAMNYLQRESSLEEIVRLVGIDSLSDNERLTMEIAKQIREDYLQQNAFDSVDTFTSFAKQEAMLSNILTFADQANHALELGSYFTEIMEGTVAVRDRMARSKYVSEDRLDEIKIISNEITHQIHLILETGGL</sequence>
<dbReference type="EC" id="7.1.2.2" evidence="1"/>
<dbReference type="EMBL" id="CP001015">
    <property type="protein sequence ID" value="ACF55503.1"/>
    <property type="molecule type" value="Genomic_DNA"/>
</dbReference>
<dbReference type="KEGG" id="spx:SPG_1210"/>
<dbReference type="HOGENOM" id="CLU_008162_3_1_9"/>
<dbReference type="GO" id="GO:0045259">
    <property type="term" value="C:proton-transporting ATP synthase complex"/>
    <property type="evidence" value="ECO:0007669"/>
    <property type="project" value="UniProtKB-ARBA"/>
</dbReference>
<dbReference type="GO" id="GO:0005524">
    <property type="term" value="F:ATP binding"/>
    <property type="evidence" value="ECO:0007669"/>
    <property type="project" value="UniProtKB-UniRule"/>
</dbReference>
<dbReference type="GO" id="GO:0046933">
    <property type="term" value="F:proton-transporting ATP synthase activity, rotational mechanism"/>
    <property type="evidence" value="ECO:0007669"/>
    <property type="project" value="UniProtKB-UniRule"/>
</dbReference>
<dbReference type="GO" id="GO:0046961">
    <property type="term" value="F:proton-transporting ATPase activity, rotational mechanism"/>
    <property type="evidence" value="ECO:0007669"/>
    <property type="project" value="InterPro"/>
</dbReference>
<dbReference type="GO" id="GO:0042777">
    <property type="term" value="P:proton motive force-driven plasma membrane ATP synthesis"/>
    <property type="evidence" value="ECO:0007669"/>
    <property type="project" value="UniProtKB-UniRule"/>
</dbReference>
<dbReference type="CDD" id="cd18111">
    <property type="entry name" value="ATP-synt_V_A-type_alpha_C"/>
    <property type="match status" value="1"/>
</dbReference>
<dbReference type="CDD" id="cd18119">
    <property type="entry name" value="ATP-synt_V_A-type_alpha_N"/>
    <property type="match status" value="1"/>
</dbReference>
<dbReference type="CDD" id="cd01134">
    <property type="entry name" value="V_A-ATPase_A"/>
    <property type="match status" value="1"/>
</dbReference>
<dbReference type="FunFam" id="2.40.30.20:FF:000002">
    <property type="entry name" value="V-type proton ATPase catalytic subunit A"/>
    <property type="match status" value="1"/>
</dbReference>
<dbReference type="FunFam" id="2.40.50.100:FF:000008">
    <property type="entry name" value="V-type proton ATPase catalytic subunit A"/>
    <property type="match status" value="1"/>
</dbReference>
<dbReference type="Gene3D" id="2.40.30.20">
    <property type="match status" value="1"/>
</dbReference>
<dbReference type="Gene3D" id="2.40.50.100">
    <property type="match status" value="1"/>
</dbReference>
<dbReference type="Gene3D" id="1.10.1140.10">
    <property type="entry name" value="Bovine Mitochondrial F1-atpase, Atp Synthase Beta Chain, Chain D, domain 3"/>
    <property type="match status" value="1"/>
</dbReference>
<dbReference type="Gene3D" id="3.40.50.300">
    <property type="entry name" value="P-loop containing nucleotide triphosphate hydrolases"/>
    <property type="match status" value="1"/>
</dbReference>
<dbReference type="HAMAP" id="MF_00309">
    <property type="entry name" value="ATP_synth_A_arch"/>
    <property type="match status" value="1"/>
</dbReference>
<dbReference type="InterPro" id="IPR055190">
    <property type="entry name" value="ATP-synt_VA_C"/>
</dbReference>
<dbReference type="InterPro" id="IPR031686">
    <property type="entry name" value="ATP-synth_a_Xtn"/>
</dbReference>
<dbReference type="InterPro" id="IPR023366">
    <property type="entry name" value="ATP_synth_asu-like_sf"/>
</dbReference>
<dbReference type="InterPro" id="IPR020003">
    <property type="entry name" value="ATPase_a/bsu_AS"/>
</dbReference>
<dbReference type="InterPro" id="IPR004100">
    <property type="entry name" value="ATPase_F1/V1/A1_a/bsu_N"/>
</dbReference>
<dbReference type="InterPro" id="IPR036121">
    <property type="entry name" value="ATPase_F1/V1/A1_a/bsu_N_sf"/>
</dbReference>
<dbReference type="InterPro" id="IPR000194">
    <property type="entry name" value="ATPase_F1/V1/A1_a/bsu_nucl-bd"/>
</dbReference>
<dbReference type="InterPro" id="IPR024034">
    <property type="entry name" value="ATPase_F1/V1_b/a_C"/>
</dbReference>
<dbReference type="InterPro" id="IPR027417">
    <property type="entry name" value="P-loop_NTPase"/>
</dbReference>
<dbReference type="InterPro" id="IPR022878">
    <property type="entry name" value="V-ATPase_asu"/>
</dbReference>
<dbReference type="NCBIfam" id="NF003220">
    <property type="entry name" value="PRK04192.1"/>
    <property type="match status" value="1"/>
</dbReference>
<dbReference type="PANTHER" id="PTHR43607:SF1">
    <property type="entry name" value="H(+)-TRANSPORTING TWO-SECTOR ATPASE"/>
    <property type="match status" value="1"/>
</dbReference>
<dbReference type="PANTHER" id="PTHR43607">
    <property type="entry name" value="V-TYPE PROTON ATPASE CATALYTIC SUBUNIT A"/>
    <property type="match status" value="1"/>
</dbReference>
<dbReference type="Pfam" id="PF00006">
    <property type="entry name" value="ATP-synt_ab"/>
    <property type="match status" value="1"/>
</dbReference>
<dbReference type="Pfam" id="PF02874">
    <property type="entry name" value="ATP-synt_ab_N"/>
    <property type="match status" value="1"/>
</dbReference>
<dbReference type="Pfam" id="PF16886">
    <property type="entry name" value="ATP-synt_ab_Xtn"/>
    <property type="match status" value="1"/>
</dbReference>
<dbReference type="Pfam" id="PF22919">
    <property type="entry name" value="ATP-synt_VA_C"/>
    <property type="match status" value="1"/>
</dbReference>
<dbReference type="SUPFAM" id="SSF47917">
    <property type="entry name" value="C-terminal domain of alpha and beta subunits of F1 ATP synthase"/>
    <property type="match status" value="1"/>
</dbReference>
<dbReference type="SUPFAM" id="SSF50615">
    <property type="entry name" value="N-terminal domain of alpha and beta subunits of F1 ATP synthase"/>
    <property type="match status" value="1"/>
</dbReference>
<dbReference type="SUPFAM" id="SSF52540">
    <property type="entry name" value="P-loop containing nucleoside triphosphate hydrolases"/>
    <property type="match status" value="1"/>
</dbReference>
<dbReference type="PROSITE" id="PS00152">
    <property type="entry name" value="ATPASE_ALPHA_BETA"/>
    <property type="match status" value="1"/>
</dbReference>
<keyword id="KW-0066">ATP synthesis</keyword>
<keyword id="KW-0067">ATP-binding</keyword>
<keyword id="KW-0375">Hydrogen ion transport</keyword>
<keyword id="KW-0406">Ion transport</keyword>
<keyword id="KW-0547">Nucleotide-binding</keyword>
<keyword id="KW-1278">Translocase</keyword>
<keyword id="KW-0813">Transport</keyword>
<comment type="function">
    <text evidence="1">Produces ATP from ADP in the presence of a proton gradient across the membrane. The V-type alpha chain is a catalytic subunit.</text>
</comment>
<comment type="catalytic activity">
    <reaction evidence="1">
        <text>ATP + H2O + 4 H(+)(in) = ADP + phosphate + 5 H(+)(out)</text>
        <dbReference type="Rhea" id="RHEA:57720"/>
        <dbReference type="ChEBI" id="CHEBI:15377"/>
        <dbReference type="ChEBI" id="CHEBI:15378"/>
        <dbReference type="ChEBI" id="CHEBI:30616"/>
        <dbReference type="ChEBI" id="CHEBI:43474"/>
        <dbReference type="ChEBI" id="CHEBI:456216"/>
        <dbReference type="EC" id="7.1.2.2"/>
    </reaction>
</comment>
<comment type="similarity">
    <text evidence="1">Belongs to the ATPase alpha/beta chains family.</text>
</comment>
<organism>
    <name type="scientific">Streptococcus pneumoniae serotype 19F (strain G54)</name>
    <dbReference type="NCBI Taxonomy" id="512566"/>
    <lineage>
        <taxon>Bacteria</taxon>
        <taxon>Bacillati</taxon>
        <taxon>Bacillota</taxon>
        <taxon>Bacilli</taxon>
        <taxon>Lactobacillales</taxon>
        <taxon>Streptococcaceae</taxon>
        <taxon>Streptococcus</taxon>
    </lineage>
</organism>
<accession>B5E552</accession>
<name>VATA_STRP4</name>
<reference key="1">
    <citation type="journal article" date="2001" name="Microb. Drug Resist.">
        <title>Annotated draft genomic sequence from a Streptococcus pneumoniae type 19F clinical isolate.</title>
        <authorList>
            <person name="Dopazo J."/>
            <person name="Mendoza A."/>
            <person name="Herrero J."/>
            <person name="Caldara F."/>
            <person name="Humbert Y."/>
            <person name="Friedli L."/>
            <person name="Guerrier M."/>
            <person name="Grand-Schenk E."/>
            <person name="Gandin C."/>
            <person name="de Francesco M."/>
            <person name="Polissi A."/>
            <person name="Buell G."/>
            <person name="Feger G."/>
            <person name="Garcia E."/>
            <person name="Peitsch M."/>
            <person name="Garcia-Bustos J.F."/>
        </authorList>
    </citation>
    <scope>NUCLEOTIDE SEQUENCE [LARGE SCALE GENOMIC DNA]</scope>
    <source>
        <strain>G54</strain>
    </source>
</reference>
<reference key="2">
    <citation type="submission" date="2008-03" db="EMBL/GenBank/DDBJ databases">
        <title>Pneumococcal beta glucoside metabolism investigated by whole genome comparison.</title>
        <authorList>
            <person name="Mulas L."/>
            <person name="Trappetti C."/>
            <person name="Hakenbeck R."/>
            <person name="Iannelli F."/>
            <person name="Pozzi G."/>
            <person name="Davidsen T.M."/>
            <person name="Tettelin H."/>
            <person name="Oggioni M."/>
        </authorList>
    </citation>
    <scope>NUCLEOTIDE SEQUENCE [LARGE SCALE GENOMIC DNA]</scope>
    <source>
        <strain>G54</strain>
    </source>
</reference>
<evidence type="ECO:0000255" key="1">
    <source>
        <dbReference type="HAMAP-Rule" id="MF_00309"/>
    </source>
</evidence>
<feature type="chain" id="PRO_1000115643" description="V-type ATP synthase alpha chain">
    <location>
        <begin position="1"/>
        <end position="591"/>
    </location>
</feature>
<feature type="binding site" evidence="1">
    <location>
        <begin position="233"/>
        <end position="240"/>
    </location>
    <ligand>
        <name>ATP</name>
        <dbReference type="ChEBI" id="CHEBI:30616"/>
    </ligand>
</feature>
<gene>
    <name evidence="1" type="primary">atpA</name>
    <name type="ordered locus">SPG_1210</name>
</gene>
<proteinExistence type="inferred from homology"/>